<organism>
    <name type="scientific">Homo sapiens</name>
    <name type="common">Human</name>
    <dbReference type="NCBI Taxonomy" id="9606"/>
    <lineage>
        <taxon>Eukaryota</taxon>
        <taxon>Metazoa</taxon>
        <taxon>Chordata</taxon>
        <taxon>Craniata</taxon>
        <taxon>Vertebrata</taxon>
        <taxon>Euteleostomi</taxon>
        <taxon>Mammalia</taxon>
        <taxon>Eutheria</taxon>
        <taxon>Euarchontoglires</taxon>
        <taxon>Primates</taxon>
        <taxon>Haplorrhini</taxon>
        <taxon>Catarrhini</taxon>
        <taxon>Hominidae</taxon>
        <taxon>Homo</taxon>
    </lineage>
</organism>
<dbReference type="EMBL" id="X01147">
    <property type="protein sequence ID" value="CAA25598.1"/>
    <property type="status" value="ALT_SEQ"/>
    <property type="molecule type" value="mRNA"/>
</dbReference>
<dbReference type="EMBL" id="AC245060">
    <property type="status" value="NOT_ANNOTATED_CDS"/>
    <property type="molecule type" value="Genomic_DNA"/>
</dbReference>
<dbReference type="PIR" id="A01964">
    <property type="entry name" value="L1HUNW"/>
</dbReference>
<dbReference type="PIR" id="A01965">
    <property type="entry name" value="L1HUNG"/>
</dbReference>
<dbReference type="PIR" id="A01966">
    <property type="entry name" value="L1HUBL"/>
</dbReference>
<dbReference type="PIR" id="A24656">
    <property type="entry name" value="L1HUEP"/>
</dbReference>
<dbReference type="EMDB" id="EMD-23717"/>
<dbReference type="EMDB" id="EMD-25149"/>
<dbReference type="EMDB" id="EMD-25606"/>
<dbReference type="EMDB" id="EMD-30486"/>
<dbReference type="EMDB" id="EMD-30487"/>
<dbReference type="EMDB" id="EMD-30488"/>
<dbReference type="EMDB" id="EMD-30573"/>
<dbReference type="EMDB" id="EMD-30993"/>
<dbReference type="EMDB" id="EMD-30994"/>
<dbReference type="EMDB" id="EMD-33307"/>
<dbReference type="EMDB" id="EMD-33308"/>
<dbReference type="EMDB" id="EMD-33434"/>
<dbReference type="EMDB" id="EMD-38882"/>
<dbReference type="EMDB" id="EMD-38885"/>
<dbReference type="SMR" id="P01701"/>
<dbReference type="FunCoup" id="P01701">
    <property type="interactions" value="460"/>
</dbReference>
<dbReference type="IMGT_GENE-DB" id="IGLV1-51"/>
<dbReference type="GlyGen" id="P01701">
    <property type="glycosylation" value="1 site, 1 O-linked glycan (1 site)"/>
</dbReference>
<dbReference type="BioMuta" id="IGLV1-51"/>
<dbReference type="DMDM" id="126543"/>
<dbReference type="jPOST" id="P01701"/>
<dbReference type="MassIVE" id="P01701"/>
<dbReference type="Ensembl" id="ENST00000390290.3">
    <property type="protein sequence ID" value="ENSP00000374825.3"/>
    <property type="gene ID" value="ENSG00000211644.3"/>
</dbReference>
<dbReference type="UCSC" id="uc062cbm.1">
    <property type="organism name" value="human"/>
</dbReference>
<dbReference type="AGR" id="HGNC:5882"/>
<dbReference type="GeneCards" id="IGLV1-51"/>
<dbReference type="HGNC" id="HGNC:5882">
    <property type="gene designation" value="IGLV1-51"/>
</dbReference>
<dbReference type="HPA" id="ENSG00000211644">
    <property type="expression patterns" value="Tissue enhanced (intestine, lymphoid tissue, urinary bladder)"/>
</dbReference>
<dbReference type="neXtProt" id="NX_P01701"/>
<dbReference type="OpenTargets" id="ENSG00000211644"/>
<dbReference type="VEuPathDB" id="HostDB:ENSG00000211644"/>
<dbReference type="GeneTree" id="ENSGT00940000154293"/>
<dbReference type="InParanoid" id="P01701"/>
<dbReference type="OMA" id="QPGASLC"/>
<dbReference type="OrthoDB" id="9838202at2759"/>
<dbReference type="PAN-GO" id="P01701">
    <property type="GO annotations" value="3 GO annotations based on evolutionary models"/>
</dbReference>
<dbReference type="PathwayCommons" id="P01701"/>
<dbReference type="Reactome" id="R-HSA-166663">
    <property type="pathway name" value="Initial triggering of complement"/>
</dbReference>
<dbReference type="Reactome" id="R-HSA-173623">
    <property type="pathway name" value="Classical antibody-mediated complement activation"/>
</dbReference>
<dbReference type="Reactome" id="R-HSA-198933">
    <property type="pathway name" value="Immunoregulatory interactions between a Lymphoid and a non-Lymphoid cell"/>
</dbReference>
<dbReference type="Reactome" id="R-HSA-202733">
    <property type="pathway name" value="Cell surface interactions at the vascular wall"/>
</dbReference>
<dbReference type="Reactome" id="R-HSA-2029481">
    <property type="pathway name" value="FCGR activation"/>
</dbReference>
<dbReference type="Reactome" id="R-HSA-2029482">
    <property type="pathway name" value="Regulation of actin dynamics for phagocytic cup formation"/>
</dbReference>
<dbReference type="Reactome" id="R-HSA-2029485">
    <property type="pathway name" value="Role of phospholipids in phagocytosis"/>
</dbReference>
<dbReference type="Reactome" id="R-HSA-2168880">
    <property type="pathway name" value="Scavenging of heme from plasma"/>
</dbReference>
<dbReference type="Reactome" id="R-HSA-2454202">
    <property type="pathway name" value="Fc epsilon receptor (FCERI) signaling"/>
</dbReference>
<dbReference type="Reactome" id="R-HSA-2730905">
    <property type="pathway name" value="Role of LAT2/NTAL/LAB on calcium mobilization"/>
</dbReference>
<dbReference type="Reactome" id="R-HSA-2871796">
    <property type="pathway name" value="FCERI mediated MAPK activation"/>
</dbReference>
<dbReference type="Reactome" id="R-HSA-2871809">
    <property type="pathway name" value="FCERI mediated Ca+2 mobilization"/>
</dbReference>
<dbReference type="Reactome" id="R-HSA-2871837">
    <property type="pathway name" value="FCERI mediated NF-kB activation"/>
</dbReference>
<dbReference type="Reactome" id="R-HSA-5690714">
    <property type="pathway name" value="CD22 mediated BCR regulation"/>
</dbReference>
<dbReference type="Reactome" id="R-HSA-9664323">
    <property type="pathway name" value="FCGR3A-mediated IL10 synthesis"/>
</dbReference>
<dbReference type="Reactome" id="R-HSA-9664422">
    <property type="pathway name" value="FCGR3A-mediated phagocytosis"/>
</dbReference>
<dbReference type="Reactome" id="R-HSA-9679191">
    <property type="pathway name" value="Potential therapeutics for SARS"/>
</dbReference>
<dbReference type="Reactome" id="R-HSA-977606">
    <property type="pathway name" value="Regulation of Complement cascade"/>
</dbReference>
<dbReference type="Reactome" id="R-HSA-983695">
    <property type="pathway name" value="Antigen activates B Cell Receptor (BCR) leading to generation of second messengers"/>
</dbReference>
<dbReference type="SignaLink" id="P01701"/>
<dbReference type="Pharos" id="P01701">
    <property type="development level" value="Tdark"/>
</dbReference>
<dbReference type="PRO" id="PR:P01701"/>
<dbReference type="Proteomes" id="UP000005640">
    <property type="component" value="Chromosome 22"/>
</dbReference>
<dbReference type="RNAct" id="P01701">
    <property type="molecule type" value="protein"/>
</dbReference>
<dbReference type="Bgee" id="ENSG00000211644">
    <property type="expression patterns" value="Expressed in duodenum and 94 other cell types or tissues"/>
</dbReference>
<dbReference type="GO" id="GO:0070062">
    <property type="term" value="C:extracellular exosome"/>
    <property type="evidence" value="ECO:0007005"/>
    <property type="project" value="UniProtKB"/>
</dbReference>
<dbReference type="GO" id="GO:0005576">
    <property type="term" value="C:extracellular region"/>
    <property type="evidence" value="ECO:0000304"/>
    <property type="project" value="Reactome"/>
</dbReference>
<dbReference type="GO" id="GO:0019814">
    <property type="term" value="C:immunoglobulin complex"/>
    <property type="evidence" value="ECO:0000318"/>
    <property type="project" value="GO_Central"/>
</dbReference>
<dbReference type="GO" id="GO:0005886">
    <property type="term" value="C:plasma membrane"/>
    <property type="evidence" value="ECO:0000304"/>
    <property type="project" value="Reactome"/>
</dbReference>
<dbReference type="GO" id="GO:0003823">
    <property type="term" value="F:antigen binding"/>
    <property type="evidence" value="ECO:0000303"/>
    <property type="project" value="UniProtKB"/>
</dbReference>
<dbReference type="GO" id="GO:0002250">
    <property type="term" value="P:adaptive immune response"/>
    <property type="evidence" value="ECO:0007669"/>
    <property type="project" value="UniProtKB-KW"/>
</dbReference>
<dbReference type="GO" id="GO:0006955">
    <property type="term" value="P:immune response"/>
    <property type="evidence" value="ECO:0000318"/>
    <property type="project" value="GO_Central"/>
</dbReference>
<dbReference type="FunFam" id="2.60.40.10:FF:000442">
    <property type="entry name" value="Immunoglobulin lambda variable 2-8"/>
    <property type="match status" value="1"/>
</dbReference>
<dbReference type="Gene3D" id="2.60.40.10">
    <property type="entry name" value="Immunoglobulins"/>
    <property type="match status" value="1"/>
</dbReference>
<dbReference type="InterPro" id="IPR007110">
    <property type="entry name" value="Ig-like_dom"/>
</dbReference>
<dbReference type="InterPro" id="IPR036179">
    <property type="entry name" value="Ig-like_dom_sf"/>
</dbReference>
<dbReference type="InterPro" id="IPR013783">
    <property type="entry name" value="Ig-like_fold"/>
</dbReference>
<dbReference type="InterPro" id="IPR003599">
    <property type="entry name" value="Ig_sub"/>
</dbReference>
<dbReference type="InterPro" id="IPR013106">
    <property type="entry name" value="Ig_V-set"/>
</dbReference>
<dbReference type="InterPro" id="IPR050150">
    <property type="entry name" value="IgV_Light_Chain"/>
</dbReference>
<dbReference type="PANTHER" id="PTHR23267">
    <property type="entry name" value="IMMUNOGLOBULIN LIGHT CHAIN"/>
    <property type="match status" value="1"/>
</dbReference>
<dbReference type="Pfam" id="PF07686">
    <property type="entry name" value="V-set"/>
    <property type="match status" value="1"/>
</dbReference>
<dbReference type="SMART" id="SM00409">
    <property type="entry name" value="IG"/>
    <property type="match status" value="1"/>
</dbReference>
<dbReference type="SMART" id="SM00406">
    <property type="entry name" value="IGv"/>
    <property type="match status" value="1"/>
</dbReference>
<dbReference type="SUPFAM" id="SSF48726">
    <property type="entry name" value="Immunoglobulin"/>
    <property type="match status" value="1"/>
</dbReference>
<dbReference type="PROSITE" id="PS50835">
    <property type="entry name" value="IG_LIKE"/>
    <property type="match status" value="1"/>
</dbReference>
<keyword id="KW-1064">Adaptive immunity</keyword>
<keyword id="KW-1003">Cell membrane</keyword>
<keyword id="KW-0903">Direct protein sequencing</keyword>
<keyword id="KW-1015">Disulfide bond</keyword>
<keyword id="KW-0391">Immunity</keyword>
<keyword id="KW-1280">Immunoglobulin</keyword>
<keyword id="KW-0393">Immunoglobulin domain</keyword>
<keyword id="KW-0472">Membrane</keyword>
<keyword id="KW-1267">Proteomics identification</keyword>
<keyword id="KW-0873">Pyrrolidone carboxylic acid</keyword>
<keyword id="KW-1185">Reference proteome</keyword>
<keyword id="KW-0964">Secreted</keyword>
<keyword id="KW-0732">Signal</keyword>
<accession>P01701</accession>
<accession>A0A075B6I5</accession>
<accession>P01702</accession>
<accession>P06316</accession>
<accession>P06888</accession>
<protein>
    <recommendedName>
        <fullName evidence="6 11">Immunoglobulin lambda variable 1-51</fullName>
    </recommendedName>
    <alternativeName>
        <fullName evidence="15">Ig lambda chain V-I region BL2</fullName>
    </alternativeName>
    <alternativeName>
        <fullName evidence="13">Ig lambda chain V-I region EPS</fullName>
    </alternativeName>
    <alternativeName>
        <fullName evidence="14">Ig lambda chain V-I region NEW</fullName>
    </alternativeName>
    <alternativeName>
        <fullName evidence="16">Ig lambda chain V-I region NIG-64</fullName>
    </alternativeName>
</protein>
<gene>
    <name evidence="6 11" type="primary">IGLV1-51</name>
</gene>
<feature type="signal peptide" evidence="3 4 5">
    <location>
        <begin position="1"/>
        <end position="19"/>
    </location>
</feature>
<feature type="chain" id="PRO_0000059824" description="Immunoglobulin lambda variable 1-51" evidence="3 4 5">
    <location>
        <begin position="20"/>
        <end position="117"/>
    </location>
</feature>
<feature type="domain" description="Ig-like" evidence="2">
    <location>
        <begin position="20"/>
        <end position="117" status="greater than"/>
    </location>
</feature>
<feature type="region of interest" description="Framework-1" evidence="1">
    <location>
        <begin position="20"/>
        <end position="44"/>
    </location>
</feature>
<feature type="region of interest" description="Complementarity-determining-1" evidence="1">
    <location>
        <begin position="45"/>
        <end position="52"/>
    </location>
</feature>
<feature type="region of interest" description="Framework-2" evidence="1">
    <location>
        <begin position="53"/>
        <end position="69"/>
    </location>
</feature>
<feature type="region of interest" description="Complementarity-determining-2" evidence="1">
    <location>
        <begin position="70"/>
        <end position="72"/>
    </location>
</feature>
<feature type="region of interest" description="Framework-3" evidence="1">
    <location>
        <begin position="73"/>
        <end position="108"/>
    </location>
</feature>
<feature type="region of interest" description="Complementarity-determining-3" evidence="1">
    <location>
        <begin position="109"/>
        <end position="117" status="greater than"/>
    </location>
</feature>
<feature type="modified residue" description="Pyrrolidone carboxylic acid" evidence="4 5">
    <location>
        <position position="20"/>
    </location>
</feature>
<feature type="disulfide bond" evidence="2">
    <location>
        <begin position="41"/>
        <end position="108"/>
    </location>
</feature>
<feature type="sequence conflict" description="In Ref. 5; AA sequence." evidence="12" ref="5">
    <original>V</original>
    <variation>L</variation>
    <location>
        <position position="29"/>
    </location>
</feature>
<feature type="sequence conflict" description="In Ref. 5; AA sequence." evidence="12" ref="5">
    <original>KVT</original>
    <variation>RVS</variation>
    <location>
        <begin position="36"/>
        <end position="38"/>
    </location>
</feature>
<feature type="sequence conflict" description="In Ref. 4; AA sequence." evidence="12" ref="4">
    <original>K</original>
    <variation>E</variation>
    <location>
        <position position="36"/>
    </location>
</feature>
<feature type="sequence conflict" description="In Ref. 3; AA sequence." evidence="12" ref="3">
    <original>SSS</original>
    <variation>GST</variation>
    <location>
        <begin position="44"/>
        <end position="46"/>
    </location>
</feature>
<feature type="sequence conflict" description="In Ref. 5; AA sequence." evidence="12" ref="5">
    <original>NNYVS</original>
    <variation>KNYVD</variation>
    <location>
        <begin position="50"/>
        <end position="54"/>
    </location>
</feature>
<feature type="sequence conflict" description="In Ref. 4; AA sequence." evidence="12" ref="4">
    <original>NNY</original>
    <variation>DNF</variation>
    <location>
        <begin position="50"/>
        <end position="52"/>
    </location>
</feature>
<feature type="sequence conflict" description="In Ref. 1; CAA25598." evidence="12" ref="1">
    <original>N</original>
    <variation>D</variation>
    <location>
        <position position="51"/>
    </location>
</feature>
<feature type="sequence conflict" description="In Ref. 3; AA sequence." evidence="12" ref="3">
    <original>YQQ</original>
    <variation>HQH</variation>
    <location>
        <begin position="56"/>
        <end position="58"/>
    </location>
</feature>
<feature type="sequence conflict" description="In Ref. 1; CAA25598." evidence="12" ref="1">
    <original>L</original>
    <variation>V</variation>
    <location>
        <position position="59"/>
    </location>
</feature>
<feature type="sequence conflict" description="In Ref. 5; AA sequence." evidence="12" ref="5">
    <original>YD</original>
    <variation>FN</variation>
    <location>
        <begin position="69"/>
        <end position="70"/>
    </location>
</feature>
<feature type="sequence conflict" description="In Ref. 3; AA sequence." evidence="12" ref="3">
    <original>DN</original>
    <variation>ED</variation>
    <location>
        <begin position="70"/>
        <end position="71"/>
    </location>
</feature>
<feature type="sequence conflict" description="In Ref. 3; AA sequence." evidence="12" ref="3">
    <original>FSG</original>
    <variation>ISA</variation>
    <location>
        <begin position="82"/>
        <end position="84"/>
    </location>
</feature>
<feature type="sequence conflict" description="In Ref. 3; AA sequence." evidence="12" ref="3">
    <original>Q</original>
    <variation>R</variation>
    <location>
        <position position="99"/>
    </location>
</feature>
<feature type="sequence conflict" description="In Ref. 5; AA sequence." evidence="12" ref="5">
    <original>D</original>
    <variation>I</variation>
    <location>
        <position position="105"/>
    </location>
</feature>
<feature type="sequence conflict" description="In Ref. 3; AA sequence." evidence="12" ref="3">
    <original>G</original>
    <variation>A</variation>
    <location>
        <position position="109"/>
    </location>
</feature>
<feature type="sequence conflict" description="In Ref. 1; CAA25598." evidence="12" ref="1">
    <original>DSSLSA</original>
    <variation>NNSLSG</variation>
    <location>
        <begin position="112"/>
        <end position="117"/>
    </location>
</feature>
<feature type="sequence conflict" description="In Ref. 5; AA sequence." evidence="12" ref="5">
    <original>SSLSA</original>
    <variation>NRRSV</variation>
    <location>
        <begin position="113"/>
        <end position="117"/>
    </location>
</feature>
<feature type="sequence conflict" description="In Ref. 3; AA sequence." evidence="12" ref="3">
    <original>S</original>
    <variation>N</variation>
    <location>
        <position position="116"/>
    </location>
</feature>
<feature type="sequence conflict" description="In Ref. 4; AA sequence." evidence="12" ref="4">
    <original>A</original>
    <variation>V</variation>
    <location>
        <position position="117"/>
    </location>
</feature>
<feature type="non-terminal residue">
    <location>
        <position position="117"/>
    </location>
</feature>
<comment type="function">
    <text evidence="7 8 9 10">V region of the variable domain of immunoglobulin light chains that participates in the antigen recognition (PubMed:24600447). Immunoglobulins, also known as antibodies, are membrane-bound or secreted glycoproteins produced by B lymphocytes. In the recognition phase of humoral immunity, the membrane-bound immunoglobulins serve as receptors which, upon binding of a specific antigen, trigger the clonal expansion and differentiation of B lymphocytes into immunoglobulins-secreting plasma cells. Secreted immunoglobulins mediate the effector phase of humoral immunity, which results in the elimination of bound antigens (PubMed:20176268, PubMed:22158414). The antigen binding site is formed by the variable domain of one heavy chain, together with that of its associated light chain. Thus, each immunoglobulin has two antigen binding sites with remarkable affinity for a particular antigen. The variable domains are assembled by a process called V-(D)-J rearrangement and can then be subjected to somatic hypermutations which, after exposure to antigen and selection, allow affinity maturation for a particular antigen (PubMed:17576170, PubMed:20176268).</text>
</comment>
<comment type="subunit">
    <text evidence="8">Immunoglobulins are composed of two identical heavy chains and two identical light chains; disulfide-linked.</text>
</comment>
<comment type="subcellular location">
    <subcellularLocation>
        <location evidence="8 9">Secreted</location>
    </subcellularLocation>
    <subcellularLocation>
        <location evidence="8 9">Cell membrane</location>
    </subcellularLocation>
</comment>
<comment type="polymorphism">
    <text>There are several alleles. The sequence shown is that of IMGT allele IGLV1-51*01.</text>
</comment>
<comment type="caution">
    <text evidence="12">For an example of a full-length immunoglobulin lambda light chain see AC P0DOX8.</text>
</comment>
<comment type="sequence caution" evidence="12">
    <conflict type="miscellaneous discrepancy">
        <sequence resource="EMBL-CDS" id="CAA25598"/>
    </conflict>
    <text>Chimeric mRNA corresponding to regions V and J of immunoglobulin kappa light chain.</text>
</comment>
<evidence type="ECO:0000250" key="1">
    <source>
        <dbReference type="UniProtKB" id="P01721"/>
    </source>
</evidence>
<evidence type="ECO:0000255" key="2">
    <source>
        <dbReference type="PROSITE-ProRule" id="PRU00114"/>
    </source>
</evidence>
<evidence type="ECO:0000269" key="3">
    <source>
    </source>
</evidence>
<evidence type="ECO:0000269" key="4">
    <source>
    </source>
</evidence>
<evidence type="ECO:0000269" key="5">
    <source>
    </source>
</evidence>
<evidence type="ECO:0000303" key="6">
    <source>
    </source>
</evidence>
<evidence type="ECO:0000303" key="7">
    <source>
    </source>
</evidence>
<evidence type="ECO:0000303" key="8">
    <source>
    </source>
</evidence>
<evidence type="ECO:0000303" key="9">
    <source>
    </source>
</evidence>
<evidence type="ECO:0000303" key="10">
    <source>
    </source>
</evidence>
<evidence type="ECO:0000303" key="11">
    <source ref="7"/>
</evidence>
<evidence type="ECO:0000305" key="12"/>
<evidence type="ECO:0000305" key="13">
    <source>
    </source>
</evidence>
<evidence type="ECO:0000305" key="14">
    <source>
    </source>
</evidence>
<evidence type="ECO:0000305" key="15">
    <source>
    </source>
</evidence>
<evidence type="ECO:0000305" key="16">
    <source>
    </source>
</evidence>
<reference key="1">
    <citation type="journal article" date="1984" name="Nucleic Acids Res.">
        <title>Molecular cloning of a human immunoglobulin lambda chain variable sequence.</title>
        <authorList>
            <person name="Tsujimoto Y."/>
            <person name="Croce C.M."/>
        </authorList>
    </citation>
    <scope>NUCLEOTIDE SEQUENCE [MRNA]</scope>
</reference>
<reference key="2">
    <citation type="journal article" date="1999" name="Nature">
        <title>The DNA sequence of human chromosome 22.</title>
        <authorList>
            <person name="Dunham I."/>
            <person name="Hunt A.R."/>
            <person name="Collins J.E."/>
            <person name="Bruskiewich R."/>
            <person name="Beare D.M."/>
            <person name="Clamp M."/>
            <person name="Smink L.J."/>
            <person name="Ainscough R."/>
            <person name="Almeida J.P."/>
            <person name="Babbage A.K."/>
            <person name="Bagguley C."/>
            <person name="Bailey J."/>
            <person name="Barlow K.F."/>
            <person name="Bates K.N."/>
            <person name="Beasley O.P."/>
            <person name="Bird C.P."/>
            <person name="Blakey S.E."/>
            <person name="Bridgeman A.M."/>
            <person name="Buck D."/>
            <person name="Burgess J."/>
            <person name="Burrill W.D."/>
            <person name="Burton J."/>
            <person name="Carder C."/>
            <person name="Carter N.P."/>
            <person name="Chen Y."/>
            <person name="Clark G."/>
            <person name="Clegg S.M."/>
            <person name="Cobley V.E."/>
            <person name="Cole C.G."/>
            <person name="Collier R.E."/>
            <person name="Connor R."/>
            <person name="Conroy D."/>
            <person name="Corby N.R."/>
            <person name="Coville G.J."/>
            <person name="Cox A.V."/>
            <person name="Davis J."/>
            <person name="Dawson E."/>
            <person name="Dhami P.D."/>
            <person name="Dockree C."/>
            <person name="Dodsworth S.J."/>
            <person name="Durbin R.M."/>
            <person name="Ellington A.G."/>
            <person name="Evans K.L."/>
            <person name="Fey J.M."/>
            <person name="Fleming K."/>
            <person name="French L."/>
            <person name="Garner A.A."/>
            <person name="Gilbert J.G.R."/>
            <person name="Goward M.E."/>
            <person name="Grafham D.V."/>
            <person name="Griffiths M.N.D."/>
            <person name="Hall C."/>
            <person name="Hall R.E."/>
            <person name="Hall-Tamlyn G."/>
            <person name="Heathcott R.W."/>
            <person name="Ho S."/>
            <person name="Holmes S."/>
            <person name="Hunt S.E."/>
            <person name="Jones M.C."/>
            <person name="Kershaw J."/>
            <person name="Kimberley A.M."/>
            <person name="King A."/>
            <person name="Laird G.K."/>
            <person name="Langford C.F."/>
            <person name="Leversha M.A."/>
            <person name="Lloyd C."/>
            <person name="Lloyd D.M."/>
            <person name="Martyn I.D."/>
            <person name="Mashreghi-Mohammadi M."/>
            <person name="Matthews L.H."/>
            <person name="Mccann O.T."/>
            <person name="Mcclay J."/>
            <person name="Mclaren S."/>
            <person name="McMurray A.A."/>
            <person name="Milne S.A."/>
            <person name="Mortimore B.J."/>
            <person name="Odell C.N."/>
            <person name="Pavitt R."/>
            <person name="Pearce A.V."/>
            <person name="Pearson D."/>
            <person name="Phillimore B.J.C.T."/>
            <person name="Phillips S.H."/>
            <person name="Plumb R.W."/>
            <person name="Ramsay H."/>
            <person name="Ramsey Y."/>
            <person name="Rogers L."/>
            <person name="Ross M.T."/>
            <person name="Scott C.E."/>
            <person name="Sehra H.K."/>
            <person name="Skuce C.D."/>
            <person name="Smalley S."/>
            <person name="Smith M.L."/>
            <person name="Soderlund C."/>
            <person name="Spragon L."/>
            <person name="Steward C.A."/>
            <person name="Sulston J.E."/>
            <person name="Swann R.M."/>
            <person name="Vaudin M."/>
            <person name="Wall M."/>
            <person name="Wallis J.M."/>
            <person name="Whiteley M.N."/>
            <person name="Willey D.L."/>
            <person name="Williams L."/>
            <person name="Williams S.A."/>
            <person name="Williamson H."/>
            <person name="Wilmer T.E."/>
            <person name="Wilming L."/>
            <person name="Wright C.L."/>
            <person name="Hubbard T."/>
            <person name="Bentley D.R."/>
            <person name="Beck S."/>
            <person name="Rogers J."/>
            <person name="Shimizu N."/>
            <person name="Minoshima S."/>
            <person name="Kawasaki K."/>
            <person name="Sasaki T."/>
            <person name="Asakawa S."/>
            <person name="Kudoh J."/>
            <person name="Shintani A."/>
            <person name="Shibuya K."/>
            <person name="Yoshizaki Y."/>
            <person name="Aoki N."/>
            <person name="Mitsuyama S."/>
            <person name="Roe B.A."/>
            <person name="Chen F."/>
            <person name="Chu L."/>
            <person name="Crabtree J."/>
            <person name="Deschamps S."/>
            <person name="Do A."/>
            <person name="Do T."/>
            <person name="Dorman A."/>
            <person name="Fang F."/>
            <person name="Fu Y."/>
            <person name="Hu P."/>
            <person name="Hua A."/>
            <person name="Kenton S."/>
            <person name="Lai H."/>
            <person name="Lao H.I."/>
            <person name="Lewis J."/>
            <person name="Lewis S."/>
            <person name="Lin S.-P."/>
            <person name="Loh P."/>
            <person name="Malaj E."/>
            <person name="Nguyen T."/>
            <person name="Pan H."/>
            <person name="Phan S."/>
            <person name="Qi S."/>
            <person name="Qian Y."/>
            <person name="Ray L."/>
            <person name="Ren Q."/>
            <person name="Shaull S."/>
            <person name="Sloan D."/>
            <person name="Song L."/>
            <person name="Wang Q."/>
            <person name="Wang Y."/>
            <person name="Wang Z."/>
            <person name="White J."/>
            <person name="Willingham D."/>
            <person name="Wu H."/>
            <person name="Yao Z."/>
            <person name="Zhan M."/>
            <person name="Zhang G."/>
            <person name="Chissoe S."/>
            <person name="Murray J."/>
            <person name="Miller N."/>
            <person name="Minx P."/>
            <person name="Fulton R."/>
            <person name="Johnson D."/>
            <person name="Bemis G."/>
            <person name="Bentley D."/>
            <person name="Bradshaw H."/>
            <person name="Bourne S."/>
            <person name="Cordes M."/>
            <person name="Du Z."/>
            <person name="Fulton L."/>
            <person name="Goela D."/>
            <person name="Graves T."/>
            <person name="Hawkins J."/>
            <person name="Hinds K."/>
            <person name="Kemp K."/>
            <person name="Latreille P."/>
            <person name="Layman D."/>
            <person name="Ozersky P."/>
            <person name="Rohlfing T."/>
            <person name="Scheet P."/>
            <person name="Walker C."/>
            <person name="Wamsley A."/>
            <person name="Wohldmann P."/>
            <person name="Pepin K."/>
            <person name="Nelson J."/>
            <person name="Korf I."/>
            <person name="Bedell J.A."/>
            <person name="Hillier L.W."/>
            <person name="Mardis E."/>
            <person name="Waterston R."/>
            <person name="Wilson R."/>
            <person name="Emanuel B.S."/>
            <person name="Shaikh T."/>
            <person name="Kurahashi H."/>
            <person name="Saitta S."/>
            <person name="Budarf M.L."/>
            <person name="McDermid H.E."/>
            <person name="Johnson A."/>
            <person name="Wong A.C.C."/>
            <person name="Morrow B.E."/>
            <person name="Edelmann L."/>
            <person name="Kim U.J."/>
            <person name="Shizuya H."/>
            <person name="Simon M.I."/>
            <person name="Dumanski J.P."/>
            <person name="Peyrard M."/>
            <person name="Kedra D."/>
            <person name="Seroussi E."/>
            <person name="Fransson I."/>
            <person name="Tapia I."/>
            <person name="Bruder C.E."/>
            <person name="O'Brien K.P."/>
            <person name="Wilkinson P."/>
            <person name="Bodenteich A."/>
            <person name="Hartman K."/>
            <person name="Hu X."/>
            <person name="Khan A.S."/>
            <person name="Lane L."/>
            <person name="Tilahun Y."/>
            <person name="Wright H."/>
        </authorList>
    </citation>
    <scope>NUCLEOTIDE SEQUENCE [LARGE SCALE GENOMIC DNA] (IMGT ALLELE IGLV1-51*01)</scope>
</reference>
<reference key="3">
    <citation type="journal article" date="1968" name="Hoppe-Seyler's Z. Physiol. Chem.">
        <title>The complete amino acid sequence of Bence Jones protein New (lambda-type). Subgroups in the variable part of immunoglobulin L-chains of the lambda-type.</title>
        <authorList>
            <person name="Langer B."/>
            <person name="Steinmetz-Kayne M."/>
            <person name="Hilschmann N."/>
        </authorList>
    </citation>
    <scope>PROTEIN SEQUENCE OF 20-117</scope>
    <scope>PYROGLUTAMATE FORMATION AT GLN-20</scope>
</reference>
<reference key="4">
    <citation type="journal article" date="1983" name="J. Biochem.">
        <title>Comparative studies on the structure of the light chains of human immunoglobulins. IV. Assignment of a subsubgroup.</title>
        <authorList>
            <person name="Kametani F."/>
            <person name="Takayasu T."/>
            <person name="Suzuki S."/>
            <person name="Shinoda T."/>
            <person name="Okuyama T."/>
            <person name="Shimizu A."/>
        </authorList>
    </citation>
    <scope>PROTEIN SEQUENCE OF 20-117</scope>
    <scope>PYROGLUTAMATE FORMATION AT GLN-20</scope>
</reference>
<reference key="5">
    <citation type="journal article" date="1985" name="Biol. Chem. Hoppe-Seyler">
        <title>The amino-acid sequence of the variable region of a carbohydrate-containing amyloid fibril protein EPS (immunoglobulin light chain, type lambda).</title>
        <authorList>
            <person name="Toft K.G."/>
            <person name="Sletten K."/>
            <person name="Husby G."/>
        </authorList>
    </citation>
    <scope>PROTEIN SEQUENCE OF 20-117</scope>
</reference>
<reference key="6">
    <citation type="journal article" date="2001" name="Exp. Clin. Immunogenet.">
        <title>Nomenclature of the human immunoglobulin lambda (IGL) genes.</title>
        <authorList>
            <person name="Lefranc M.P."/>
        </authorList>
    </citation>
    <scope>NOMENCLATURE</scope>
</reference>
<reference key="7">
    <citation type="book" date="2001" name="The Immunoglobulin FactsBook.">
        <title>The Immunoglobulin FactsBook.</title>
        <editorList>
            <person name="Lefranc M.P."/>
            <person name="Lefranc G."/>
        </editorList>
        <authorList>
            <person name="Lefranc M.P."/>
            <person name="Lefranc G."/>
        </authorList>
    </citation>
    <scope>NOMENCLATURE</scope>
</reference>
<reference key="8">
    <citation type="journal article" date="2007" name="Annu. Rev. Genet.">
        <title>Immunoglobulin somatic hypermutation.</title>
        <authorList>
            <person name="Teng G."/>
            <person name="Papavasiliou F.N."/>
        </authorList>
    </citation>
    <scope>REVIEW ON SOMATIC HYPERMUTATION</scope>
</reference>
<reference key="9">
    <citation type="journal article" date="2010" name="J. Allergy Clin. Immunol.">
        <title>Structure and function of immunoglobulins.</title>
        <authorList>
            <person name="Schroeder H.W. Jr."/>
            <person name="Cavacini L."/>
        </authorList>
    </citation>
    <scope>REVIEW ON IMMUNOGLOBULINS</scope>
</reference>
<reference key="10">
    <citation type="journal article" date="2011" name="BMC Syst. Biol.">
        <title>Initial characterization of the human central proteome.</title>
        <authorList>
            <person name="Burkard T.R."/>
            <person name="Planyavsky M."/>
            <person name="Kaupe I."/>
            <person name="Breitwieser F.P."/>
            <person name="Buerckstuemmer T."/>
            <person name="Bennett K.L."/>
            <person name="Superti-Furga G."/>
            <person name="Colinge J."/>
        </authorList>
    </citation>
    <scope>IDENTIFICATION BY MASS SPECTROMETRY [LARGE SCALE ANALYSIS]</scope>
</reference>
<reference key="11">
    <citation type="journal article" date="2012" name="Nat. Rev. Immunol.">
        <title>Molecular programming of B cell memory.</title>
        <authorList>
            <person name="McHeyzer-Williams M."/>
            <person name="Okitsu S."/>
            <person name="Wang N."/>
            <person name="McHeyzer-Williams L."/>
        </authorList>
    </citation>
    <scope>REVIEW ON FUNCTION</scope>
</reference>
<reference key="12">
    <citation type="journal article" date="2014" name="Front. Immunol.">
        <title>Immunoglobulin and T Cell Receptor Genes: IMGT((R)) and the Birth and Rise of Immunoinformatics.</title>
        <authorList>
            <person name="Lefranc M.P."/>
        </authorList>
    </citation>
    <scope>NOMENCLATURE</scope>
</reference>
<proteinExistence type="evidence at protein level"/>
<name>LV151_HUMAN</name>
<sequence>MTCSPLLLTLLIHCTGSWAQSVLTQPPSVSAAPGQKVTISCSGSSSNIGNNYVSWYQQLPGTAPKLLIYDNNKRPSGIPDRFSGSKSGTSATLGITGLQTGDEADYYCGTWDSSLSA</sequence>